<keyword id="KW-1185">Reference proteome</keyword>
<keyword id="KW-0677">Repeat</keyword>
<keyword id="KW-0853">WD repeat</keyword>
<comment type="function">
    <text evidence="3">Regulatory component of the Usp12-46 deubiquitylase complex (PubMed:37798281). This complex deubiquitylates the wg/wingless-signaling receptor arr/arrow, which stabilizes the receptor and increases its concentration at the cell surface; this enhances the sensitivity of cells to wg/wingless-signal stimulation (PubMed:37798281). This increases the amplitude and spatial range of the signaling response to the wg/wingless morphogen gradient, facilitating the precise concentration-dependent regulation of its target genes (PubMed:37798281). Required for wg/wingless-mediated signaling in the wing imaginal disc and for wg/wingless-dependent regulation of intestinal stem cell proliferation (PubMed:37798281).</text>
</comment>
<comment type="subunit">
    <text evidence="3">Component of the Usp12-46 deubiquitylase complex consisting of Usp12-46, Wdr20 and Uaf1; regulatory subunit that, together with Uaf1, stabilizes Usp12-46 (PubMed:37798281). The Usp12-46 deubiquitylase complex associates with arr/arrow; the interaction leads to deubiquitination and stabilization of arr/arrow (PubMed:37798281).</text>
</comment>
<comment type="developmental stage">
    <text evidence="3">Expressed in the larval wing imaginal disc.</text>
</comment>
<comment type="disruption phenotype">
    <text evidence="3">Viable but sterile with reduced lifespan (PubMed:37798281). Severe defects in adult intestinal epithelium; increased number of intestinal stem and progenitor cells in the adult midgut (PubMed:37798281).</text>
</comment>
<feature type="chain" id="PRO_0000461426" description="WD repeat-containing protein 20 homolog">
    <location>
        <begin position="1"/>
        <end position="909"/>
    </location>
</feature>
<feature type="repeat" description="WD 1" evidence="1">
    <location>
        <begin position="248"/>
        <end position="288"/>
    </location>
</feature>
<feature type="repeat" description="WD 2" evidence="1">
    <location>
        <begin position="321"/>
        <end position="362"/>
    </location>
</feature>
<feature type="repeat" description="WD 3" evidence="1">
    <location>
        <begin position="363"/>
        <end position="402"/>
    </location>
</feature>
<feature type="repeat" description="WD 4" evidence="1">
    <location>
        <begin position="470"/>
        <end position="517"/>
    </location>
</feature>
<feature type="repeat" description="WD 5" evidence="1">
    <location>
        <begin position="856"/>
        <end position="893"/>
    </location>
</feature>
<feature type="region of interest" description="Disordered" evidence="2">
    <location>
        <begin position="58"/>
        <end position="132"/>
    </location>
</feature>
<feature type="region of interest" description="Disordered" evidence="2">
    <location>
        <begin position="458"/>
        <end position="483"/>
    </location>
</feature>
<feature type="region of interest" description="Disordered" evidence="2">
    <location>
        <begin position="554"/>
        <end position="628"/>
    </location>
</feature>
<feature type="region of interest" description="Disordered" evidence="2">
    <location>
        <begin position="661"/>
        <end position="699"/>
    </location>
</feature>
<feature type="region of interest" description="Disordered" evidence="2">
    <location>
        <begin position="720"/>
        <end position="739"/>
    </location>
</feature>
<feature type="region of interest" description="Disordered" evidence="2">
    <location>
        <begin position="749"/>
        <end position="775"/>
    </location>
</feature>
<feature type="compositionally biased region" description="Low complexity" evidence="2">
    <location>
        <begin position="80"/>
        <end position="107"/>
    </location>
</feature>
<feature type="compositionally biased region" description="Low complexity" evidence="2">
    <location>
        <begin position="115"/>
        <end position="127"/>
    </location>
</feature>
<feature type="compositionally biased region" description="Polar residues" evidence="2">
    <location>
        <begin position="555"/>
        <end position="569"/>
    </location>
</feature>
<feature type="compositionally biased region" description="Polar residues" evidence="2">
    <location>
        <begin position="595"/>
        <end position="606"/>
    </location>
</feature>
<feature type="compositionally biased region" description="Low complexity" evidence="2">
    <location>
        <begin position="612"/>
        <end position="628"/>
    </location>
</feature>
<feature type="compositionally biased region" description="Low complexity" evidence="2">
    <location>
        <begin position="673"/>
        <end position="699"/>
    </location>
</feature>
<accession>Q9VBC4</accession>
<accession>Q8T4E0</accession>
<reference evidence="9" key="1">
    <citation type="journal article" date="2000" name="Science">
        <title>The genome sequence of Drosophila melanogaster.</title>
        <authorList>
            <person name="Adams M.D."/>
            <person name="Celniker S.E."/>
            <person name="Holt R.A."/>
            <person name="Evans C.A."/>
            <person name="Gocayne J.D."/>
            <person name="Amanatides P.G."/>
            <person name="Scherer S.E."/>
            <person name="Li P.W."/>
            <person name="Hoskins R.A."/>
            <person name="Galle R.F."/>
            <person name="George R.A."/>
            <person name="Lewis S.E."/>
            <person name="Richards S."/>
            <person name="Ashburner M."/>
            <person name="Henderson S.N."/>
            <person name="Sutton G.G."/>
            <person name="Wortman J.R."/>
            <person name="Yandell M.D."/>
            <person name="Zhang Q."/>
            <person name="Chen L.X."/>
            <person name="Brandon R.C."/>
            <person name="Rogers Y.-H.C."/>
            <person name="Blazej R.G."/>
            <person name="Champe M."/>
            <person name="Pfeiffer B.D."/>
            <person name="Wan K.H."/>
            <person name="Doyle C."/>
            <person name="Baxter E.G."/>
            <person name="Helt G."/>
            <person name="Nelson C.R."/>
            <person name="Miklos G.L.G."/>
            <person name="Abril J.F."/>
            <person name="Agbayani A."/>
            <person name="An H.-J."/>
            <person name="Andrews-Pfannkoch C."/>
            <person name="Baldwin D."/>
            <person name="Ballew R.M."/>
            <person name="Basu A."/>
            <person name="Baxendale J."/>
            <person name="Bayraktaroglu L."/>
            <person name="Beasley E.M."/>
            <person name="Beeson K.Y."/>
            <person name="Benos P.V."/>
            <person name="Berman B.P."/>
            <person name="Bhandari D."/>
            <person name="Bolshakov S."/>
            <person name="Borkova D."/>
            <person name="Botchan M.R."/>
            <person name="Bouck J."/>
            <person name="Brokstein P."/>
            <person name="Brottier P."/>
            <person name="Burtis K.C."/>
            <person name="Busam D.A."/>
            <person name="Butler H."/>
            <person name="Cadieu E."/>
            <person name="Center A."/>
            <person name="Chandra I."/>
            <person name="Cherry J.M."/>
            <person name="Cawley S."/>
            <person name="Dahlke C."/>
            <person name="Davenport L.B."/>
            <person name="Davies P."/>
            <person name="de Pablos B."/>
            <person name="Delcher A."/>
            <person name="Deng Z."/>
            <person name="Mays A.D."/>
            <person name="Dew I."/>
            <person name="Dietz S.M."/>
            <person name="Dodson K."/>
            <person name="Doup L.E."/>
            <person name="Downes M."/>
            <person name="Dugan-Rocha S."/>
            <person name="Dunkov B.C."/>
            <person name="Dunn P."/>
            <person name="Durbin K.J."/>
            <person name="Evangelista C.C."/>
            <person name="Ferraz C."/>
            <person name="Ferriera S."/>
            <person name="Fleischmann W."/>
            <person name="Fosler C."/>
            <person name="Gabrielian A.E."/>
            <person name="Garg N.S."/>
            <person name="Gelbart W.M."/>
            <person name="Glasser K."/>
            <person name="Glodek A."/>
            <person name="Gong F."/>
            <person name="Gorrell J.H."/>
            <person name="Gu Z."/>
            <person name="Guan P."/>
            <person name="Harris M."/>
            <person name="Harris N.L."/>
            <person name="Harvey D.A."/>
            <person name="Heiman T.J."/>
            <person name="Hernandez J.R."/>
            <person name="Houck J."/>
            <person name="Hostin D."/>
            <person name="Houston K.A."/>
            <person name="Howland T.J."/>
            <person name="Wei M.-H."/>
            <person name="Ibegwam C."/>
            <person name="Jalali M."/>
            <person name="Kalush F."/>
            <person name="Karpen G.H."/>
            <person name="Ke Z."/>
            <person name="Kennison J.A."/>
            <person name="Ketchum K.A."/>
            <person name="Kimmel B.E."/>
            <person name="Kodira C.D."/>
            <person name="Kraft C.L."/>
            <person name="Kravitz S."/>
            <person name="Kulp D."/>
            <person name="Lai Z."/>
            <person name="Lasko P."/>
            <person name="Lei Y."/>
            <person name="Levitsky A.A."/>
            <person name="Li J.H."/>
            <person name="Li Z."/>
            <person name="Liang Y."/>
            <person name="Lin X."/>
            <person name="Liu X."/>
            <person name="Mattei B."/>
            <person name="McIntosh T.C."/>
            <person name="McLeod M.P."/>
            <person name="McPherson D."/>
            <person name="Merkulov G."/>
            <person name="Milshina N.V."/>
            <person name="Mobarry C."/>
            <person name="Morris J."/>
            <person name="Moshrefi A."/>
            <person name="Mount S.M."/>
            <person name="Moy M."/>
            <person name="Murphy B."/>
            <person name="Murphy L."/>
            <person name="Muzny D.M."/>
            <person name="Nelson D.L."/>
            <person name="Nelson D.R."/>
            <person name="Nelson K.A."/>
            <person name="Nixon K."/>
            <person name="Nusskern D.R."/>
            <person name="Pacleb J.M."/>
            <person name="Palazzolo M."/>
            <person name="Pittman G.S."/>
            <person name="Pan S."/>
            <person name="Pollard J."/>
            <person name="Puri V."/>
            <person name="Reese M.G."/>
            <person name="Reinert K."/>
            <person name="Remington K."/>
            <person name="Saunders R.D.C."/>
            <person name="Scheeler F."/>
            <person name="Shen H."/>
            <person name="Shue B.C."/>
            <person name="Siden-Kiamos I."/>
            <person name="Simpson M."/>
            <person name="Skupski M.P."/>
            <person name="Smith T.J."/>
            <person name="Spier E."/>
            <person name="Spradling A.C."/>
            <person name="Stapleton M."/>
            <person name="Strong R."/>
            <person name="Sun E."/>
            <person name="Svirskas R."/>
            <person name="Tector C."/>
            <person name="Turner R."/>
            <person name="Venter E."/>
            <person name="Wang A.H."/>
            <person name="Wang X."/>
            <person name="Wang Z.-Y."/>
            <person name="Wassarman D.A."/>
            <person name="Weinstock G.M."/>
            <person name="Weissenbach J."/>
            <person name="Williams S.M."/>
            <person name="Woodage T."/>
            <person name="Worley K.C."/>
            <person name="Wu D."/>
            <person name="Yang S."/>
            <person name="Yao Q.A."/>
            <person name="Ye J."/>
            <person name="Yeh R.-F."/>
            <person name="Zaveri J.S."/>
            <person name="Zhan M."/>
            <person name="Zhang G."/>
            <person name="Zhao Q."/>
            <person name="Zheng L."/>
            <person name="Zheng X.H."/>
            <person name="Zhong F.N."/>
            <person name="Zhong W."/>
            <person name="Zhou X."/>
            <person name="Zhu S.C."/>
            <person name="Zhu X."/>
            <person name="Smith H.O."/>
            <person name="Gibbs R.A."/>
            <person name="Myers E.W."/>
            <person name="Rubin G.M."/>
            <person name="Venter J.C."/>
        </authorList>
    </citation>
    <scope>NUCLEOTIDE SEQUENCE [LARGE SCALE GENOMIC DNA]</scope>
    <source>
        <strain evidence="9">Berkeley</strain>
    </source>
</reference>
<reference evidence="9" key="2">
    <citation type="journal article" date="2002" name="Genome Biol.">
        <title>Annotation of the Drosophila melanogaster euchromatic genome: a systematic review.</title>
        <authorList>
            <person name="Misra S."/>
            <person name="Crosby M.A."/>
            <person name="Mungall C.J."/>
            <person name="Matthews B.B."/>
            <person name="Campbell K.S."/>
            <person name="Hradecky P."/>
            <person name="Huang Y."/>
            <person name="Kaminker J.S."/>
            <person name="Millburn G.H."/>
            <person name="Prochnik S.E."/>
            <person name="Smith C.D."/>
            <person name="Tupy J.L."/>
            <person name="Whitfield E.J."/>
            <person name="Bayraktaroglu L."/>
            <person name="Berman B.P."/>
            <person name="Bettencourt B.R."/>
            <person name="Celniker S.E."/>
            <person name="de Grey A.D.N.J."/>
            <person name="Drysdale R.A."/>
            <person name="Harris N.L."/>
            <person name="Richter J."/>
            <person name="Russo S."/>
            <person name="Schroeder A.J."/>
            <person name="Shu S.Q."/>
            <person name="Stapleton M."/>
            <person name="Yamada C."/>
            <person name="Ashburner M."/>
            <person name="Gelbart W.M."/>
            <person name="Rubin G.M."/>
            <person name="Lewis S.E."/>
        </authorList>
    </citation>
    <scope>GENOME REANNOTATION</scope>
    <source>
        <strain evidence="9">Berkeley</strain>
    </source>
</reference>
<reference evidence="6" key="3">
    <citation type="journal article" date="2002" name="Genome Biol.">
        <title>A Drosophila full-length cDNA resource.</title>
        <authorList>
            <person name="Stapleton M."/>
            <person name="Carlson J.W."/>
            <person name="Brokstein P."/>
            <person name="Yu C."/>
            <person name="Champe M."/>
            <person name="George R.A."/>
            <person name="Guarin H."/>
            <person name="Kronmiller B."/>
            <person name="Pacleb J.M."/>
            <person name="Park S."/>
            <person name="Wan K.H."/>
            <person name="Rubin G.M."/>
            <person name="Celniker S.E."/>
        </authorList>
    </citation>
    <scope>NUCLEOTIDE SEQUENCE [LARGE SCALE MRNA]</scope>
    <source>
        <strain evidence="6">Berkeley</strain>
        <tissue evidence="6">Testis</tissue>
    </source>
</reference>
<reference evidence="7" key="4">
    <citation type="submission" date="2005-03" db="EMBL/GenBank/DDBJ databases">
        <authorList>
            <person name="Stapleton M."/>
            <person name="Carlson J."/>
            <person name="Chavez C."/>
            <person name="Frise E."/>
            <person name="George R."/>
            <person name="Pacleb J."/>
            <person name="Park S."/>
            <person name="Wan K."/>
            <person name="Yu C."/>
            <person name="Rubin G.M."/>
            <person name="Celniker S."/>
        </authorList>
    </citation>
    <scope>NUCLEOTIDE SEQUENCE [LARGE SCALE MRNA]</scope>
    <source>
        <strain evidence="7">Berkeley</strain>
        <tissue evidence="7">Embryo</tissue>
    </source>
</reference>
<reference key="5">
    <citation type="journal article" date="2023" name="Nat. Commun.">
        <title>The USP46 deubiquitylase complex increases Wingless/Wnt signaling strength by stabilizing Arrow/LRP6.</title>
        <authorList>
            <person name="Spencer Z.T."/>
            <person name="Ng V.H."/>
            <person name="Benchabane H."/>
            <person name="Siddiqui G.S."/>
            <person name="Duwadi D."/>
            <person name="Maines B."/>
            <person name="Bryant J.M."/>
            <person name="Schwarzkopf A."/>
            <person name="Yuan K."/>
            <person name="Kassel S.N."/>
            <person name="Mishra A."/>
            <person name="Pimentel A."/>
            <person name="Lebensohn A.M."/>
            <person name="Rohatgi R."/>
            <person name="Gerber S.A."/>
            <person name="Robbins D.J."/>
            <person name="Lee E."/>
            <person name="Ahmed Y."/>
        </authorList>
    </citation>
    <scope>FUNCTION</scope>
    <scope>IDENTIFICATION IN THE USP46 COMPLEX</scope>
    <scope>INTERACTION WITH ARR</scope>
    <scope>DEVELOPMENTAL STAGE</scope>
    <scope>DISRUPTION PHENOTYPE</scope>
</reference>
<gene>
    <name evidence="4 8" type="primary">Wdr20</name>
    <name evidence="8" type="ORF">CG6420</name>
</gene>
<proteinExistence type="evidence at protein level"/>
<name>WDR20_DROME</name>
<evidence type="ECO:0000255" key="1"/>
<evidence type="ECO:0000256" key="2">
    <source>
        <dbReference type="SAM" id="MobiDB-lite"/>
    </source>
</evidence>
<evidence type="ECO:0000269" key="3">
    <source>
    </source>
</evidence>
<evidence type="ECO:0000303" key="4">
    <source>
    </source>
</evidence>
<evidence type="ECO:0000305" key="5"/>
<evidence type="ECO:0000312" key="6">
    <source>
        <dbReference type="EMBL" id="AAL89974.1"/>
    </source>
</evidence>
<evidence type="ECO:0000312" key="7">
    <source>
        <dbReference type="EMBL" id="AAX33413.1"/>
    </source>
</evidence>
<evidence type="ECO:0000312" key="8">
    <source>
        <dbReference type="FlyBase" id="FBgn0039451"/>
    </source>
</evidence>
<evidence type="ECO:0000312" key="9">
    <source>
        <dbReference type="Proteomes" id="UP000000803"/>
    </source>
</evidence>
<protein>
    <recommendedName>
        <fullName evidence="5">WD repeat-containing protein 20 homolog</fullName>
    </recommendedName>
</protein>
<organism evidence="9">
    <name type="scientific">Drosophila melanogaster</name>
    <name type="common">Fruit fly</name>
    <dbReference type="NCBI Taxonomy" id="7227"/>
    <lineage>
        <taxon>Eukaryota</taxon>
        <taxon>Metazoa</taxon>
        <taxon>Ecdysozoa</taxon>
        <taxon>Arthropoda</taxon>
        <taxon>Hexapoda</taxon>
        <taxon>Insecta</taxon>
        <taxon>Pterygota</taxon>
        <taxon>Neoptera</taxon>
        <taxon>Endopterygota</taxon>
        <taxon>Diptera</taxon>
        <taxon>Brachycera</taxon>
        <taxon>Muscomorpha</taxon>
        <taxon>Ephydroidea</taxon>
        <taxon>Drosophilidae</taxon>
        <taxon>Drosophila</taxon>
        <taxon>Sophophora</taxon>
    </lineage>
</organism>
<sequence>MANQLDASVKDDLKTQFVTREGTYRLLTLSEYSRPNRVGYSSNQSSPQVRVSMVTLPSPAQGKLGSDVGVGTPVGGGTAGANTTTTNGSSPGASPTGAAGASTAISNGGAGGDYSHSNHNSNSAGNNTVEARLGGGISMHSMMNGGVVDQNGVATNQVLGGDRICFNFGRDLYVYSFRGAKKGTEMSKPIDKKFYKGTNPSCHDFNISSATPTGAPLLVGFTTGQIQLVSPHVGPREVRKLFNEERLIDKTKVTCLKWLPNSPHLFLAAHASGHLYLYNEELPCAATAPSYQPFKLGDGYTILTSKSKTTRNPLFKWVFSTDNCCVNEFCFSPCGSHLAVVSQDGFLRVFHYDTMELLGIARSYFGGFLCVCWSPDGKYIVVGGEDDLVTVWSLHERRVVARGQGHRSWVSVVAFDPYTTSYTNWDGGDFSDDENQMNEYSHSREARFSGDSTANGGFEGFDRNSTPVHADRNGPHSASFRSDASSAEKLMSYRLGSVSQDTQICLWDITEDVLRHPLVLRQPANSERAYLNGGVDEEAEAEDGIKVIRPVAMSGQATGQQAESGSCSPTREAAGGGTGNGAGEHSNSSSSKFSTANCTISSQSSPDDCDTEAATPASTSSNAGAGSVAGAGAVASTKQNNRNHGTGNSIKFPNCISATKSDSIDGGGGSGSGQRPSQTTSGYNSKTSNSSNKSSNSGSGFSAFNSLTQRLSNFSFLSSSEKKGAGYEGSHSTAHRQHRKAMSMLKSYNQHNHTGGHNNHSQSNNSSSSNFGHSSTLDSNAAGAIGSSSTAHSFGSLKLSRSSHHSSLATAAHASGSAAGSGSGVSSFDPMQLIGTPACPRFDECPLLEPLVCKKIAHERLTALIFREDCFLTACQDGFIYTWARPGHATHATQHLSPGQAAAPGGTVI</sequence>
<dbReference type="EMBL" id="AE014297">
    <property type="protein sequence ID" value="AAF56618.2"/>
    <property type="molecule type" value="Genomic_DNA"/>
</dbReference>
<dbReference type="EMBL" id="AE014297">
    <property type="protein sequence ID" value="AHN57544.1"/>
    <property type="molecule type" value="Genomic_DNA"/>
</dbReference>
<dbReference type="EMBL" id="AY089236">
    <property type="protein sequence ID" value="AAL89974.1"/>
    <property type="molecule type" value="mRNA"/>
</dbReference>
<dbReference type="EMBL" id="BT021265">
    <property type="protein sequence ID" value="AAX33413.1"/>
    <property type="molecule type" value="mRNA"/>
</dbReference>
<dbReference type="RefSeq" id="NP_001287545.1">
    <property type="nucleotide sequence ID" value="NM_001300616.1"/>
</dbReference>
<dbReference type="RefSeq" id="NP_651499.2">
    <property type="nucleotide sequence ID" value="NM_143242.3"/>
</dbReference>
<dbReference type="SMR" id="Q9VBC4"/>
<dbReference type="ComplexPortal" id="CPX-9262">
    <property type="entry name" value="USP46 deubiquitinase complex"/>
</dbReference>
<dbReference type="FunCoup" id="Q9VBC4">
    <property type="interactions" value="223"/>
</dbReference>
<dbReference type="IntAct" id="Q9VBC4">
    <property type="interactions" value="14"/>
</dbReference>
<dbReference type="STRING" id="7227.FBpp0308349"/>
<dbReference type="GlyGen" id="Q9VBC4">
    <property type="glycosylation" value="2 sites"/>
</dbReference>
<dbReference type="PaxDb" id="7227-FBpp0084418"/>
<dbReference type="DNASU" id="43218"/>
<dbReference type="EnsemblMetazoa" id="FBtr0085046">
    <property type="protein sequence ID" value="FBpp0084418"/>
    <property type="gene ID" value="FBgn0039451"/>
</dbReference>
<dbReference type="EnsemblMetazoa" id="FBtr0339242">
    <property type="protein sequence ID" value="FBpp0308349"/>
    <property type="gene ID" value="FBgn0039451"/>
</dbReference>
<dbReference type="GeneID" id="43218"/>
<dbReference type="KEGG" id="dme:Dmel_CG6420"/>
<dbReference type="UCSC" id="CG6420-RA">
    <property type="organism name" value="d. melanogaster"/>
</dbReference>
<dbReference type="AGR" id="FB:FBgn0039451"/>
<dbReference type="FlyBase" id="FBgn0039451">
    <property type="gene designation" value="Wdr20"/>
</dbReference>
<dbReference type="VEuPathDB" id="VectorBase:FBgn0039451"/>
<dbReference type="eggNOG" id="KOG2394">
    <property type="taxonomic scope" value="Eukaryota"/>
</dbReference>
<dbReference type="GeneTree" id="ENSGT00390000007686"/>
<dbReference type="HOGENOM" id="CLU_005019_1_0_1"/>
<dbReference type="OMA" id="CHDFNAN"/>
<dbReference type="OrthoDB" id="3367at2759"/>
<dbReference type="Reactome" id="R-DME-5689880">
    <property type="pathway name" value="Ub-specific processing proteases"/>
</dbReference>
<dbReference type="BioGRID-ORCS" id="43218">
    <property type="hits" value="0 hits in 3 CRISPR screens"/>
</dbReference>
<dbReference type="ChiTaRS" id="CG6420">
    <property type="organism name" value="fly"/>
</dbReference>
<dbReference type="Proteomes" id="UP000000803">
    <property type="component" value="Chromosome 3R"/>
</dbReference>
<dbReference type="Bgee" id="FBgn0039451">
    <property type="expression patterns" value="Expressed in distal medullary amacrine neuron Dm11 in insect head and 138 other cell types or tissues"/>
</dbReference>
<dbReference type="GO" id="GO:1905368">
    <property type="term" value="C:peptidase complex"/>
    <property type="evidence" value="ECO:0000353"/>
    <property type="project" value="FlyBase"/>
</dbReference>
<dbReference type="GO" id="GO:0035800">
    <property type="term" value="F:deubiquitinase activator activity"/>
    <property type="evidence" value="ECO:0000304"/>
    <property type="project" value="FlyBase"/>
</dbReference>
<dbReference type="GO" id="GO:2000059">
    <property type="term" value="P:negative regulation of ubiquitin-dependent protein catabolic process"/>
    <property type="evidence" value="ECO:0000314"/>
    <property type="project" value="FlyBase"/>
</dbReference>
<dbReference type="GO" id="GO:0090263">
    <property type="term" value="P:positive regulation of canonical Wnt signaling pathway"/>
    <property type="evidence" value="ECO:0000315"/>
    <property type="project" value="FlyBase"/>
</dbReference>
<dbReference type="Gene3D" id="2.130.10.10">
    <property type="entry name" value="YVTN repeat-like/Quinoprotein amine dehydrogenase"/>
    <property type="match status" value="2"/>
</dbReference>
<dbReference type="InterPro" id="IPR015943">
    <property type="entry name" value="WD40/YVTN_repeat-like_dom_sf"/>
</dbReference>
<dbReference type="InterPro" id="IPR036322">
    <property type="entry name" value="WD40_repeat_dom_sf"/>
</dbReference>
<dbReference type="InterPro" id="IPR001680">
    <property type="entry name" value="WD40_rpt"/>
</dbReference>
<dbReference type="InterPro" id="IPR051362">
    <property type="entry name" value="WD_repeat_creC_regulators"/>
</dbReference>
<dbReference type="PANTHER" id="PTHR14107:SF16">
    <property type="entry name" value="AT02583P"/>
    <property type="match status" value="1"/>
</dbReference>
<dbReference type="PANTHER" id="PTHR14107">
    <property type="entry name" value="WD REPEAT PROTEIN"/>
    <property type="match status" value="1"/>
</dbReference>
<dbReference type="Pfam" id="PF00400">
    <property type="entry name" value="WD40"/>
    <property type="match status" value="2"/>
</dbReference>
<dbReference type="SMART" id="SM00320">
    <property type="entry name" value="WD40"/>
    <property type="match status" value="5"/>
</dbReference>
<dbReference type="SUPFAM" id="SSF50978">
    <property type="entry name" value="WD40 repeat-like"/>
    <property type="match status" value="1"/>
</dbReference>
<dbReference type="PROSITE" id="PS00678">
    <property type="entry name" value="WD_REPEATS_1"/>
    <property type="match status" value="1"/>
</dbReference>
<dbReference type="PROSITE" id="PS50082">
    <property type="entry name" value="WD_REPEATS_2"/>
    <property type="match status" value="1"/>
</dbReference>
<dbReference type="PROSITE" id="PS50294">
    <property type="entry name" value="WD_REPEATS_REGION"/>
    <property type="match status" value="1"/>
</dbReference>